<dbReference type="EMBL" id="BX640436">
    <property type="protein sequence ID" value="CAE39591.1"/>
    <property type="molecule type" value="Genomic_DNA"/>
</dbReference>
<dbReference type="RefSeq" id="WP_010929497.1">
    <property type="nucleotide sequence ID" value="NC_002928.3"/>
</dbReference>
<dbReference type="GeneID" id="93206111"/>
<dbReference type="KEGG" id="bpa:BPP4312A"/>
<dbReference type="HOGENOM" id="CLU_2913301_0_0_4"/>
<dbReference type="Proteomes" id="UP000001421">
    <property type="component" value="Chromosome"/>
</dbReference>
<proteinExistence type="inferred from homology"/>
<accession>Q7W2U1</accession>
<keyword id="KW-0732">Signal</keyword>
<gene>
    <name type="primary">ptlI</name>
    <name type="ordered locus">BPP4312.1</name>
</gene>
<reference key="1">
    <citation type="journal article" date="2003" name="Nat. Genet.">
        <title>Comparative analysis of the genome sequences of Bordetella pertussis, Bordetella parapertussis and Bordetella bronchiseptica.</title>
        <authorList>
            <person name="Parkhill J."/>
            <person name="Sebaihia M."/>
            <person name="Preston A."/>
            <person name="Murphy L.D."/>
            <person name="Thomson N.R."/>
            <person name="Harris D.E."/>
            <person name="Holden M.T.G."/>
            <person name="Churcher C.M."/>
            <person name="Bentley S.D."/>
            <person name="Mungall K.L."/>
            <person name="Cerdeno-Tarraga A.-M."/>
            <person name="Temple L."/>
            <person name="James K.D."/>
            <person name="Harris B."/>
            <person name="Quail M.A."/>
            <person name="Achtman M."/>
            <person name="Atkin R."/>
            <person name="Baker S."/>
            <person name="Basham D."/>
            <person name="Bason N."/>
            <person name="Cherevach I."/>
            <person name="Chillingworth T."/>
            <person name="Collins M."/>
            <person name="Cronin A."/>
            <person name="Davis P."/>
            <person name="Doggett J."/>
            <person name="Feltwell T."/>
            <person name="Goble A."/>
            <person name="Hamlin N."/>
            <person name="Hauser H."/>
            <person name="Holroyd S."/>
            <person name="Jagels K."/>
            <person name="Leather S."/>
            <person name="Moule S."/>
            <person name="Norberczak H."/>
            <person name="O'Neil S."/>
            <person name="Ormond D."/>
            <person name="Price C."/>
            <person name="Rabbinowitsch E."/>
            <person name="Rutter S."/>
            <person name="Sanders M."/>
            <person name="Saunders D."/>
            <person name="Seeger K."/>
            <person name="Sharp S."/>
            <person name="Simmonds M."/>
            <person name="Skelton J."/>
            <person name="Squares R."/>
            <person name="Squares S."/>
            <person name="Stevens K."/>
            <person name="Unwin L."/>
            <person name="Whitehead S."/>
            <person name="Barrell B.G."/>
            <person name="Maskell D.J."/>
        </authorList>
    </citation>
    <scope>NUCLEOTIDE SEQUENCE [LARGE SCALE GENOMIC DNA]</scope>
    <source>
        <strain>12822 / ATCC BAA-587 / NCTC 13253</strain>
    </source>
</reference>
<reference key="2">
    <citation type="journal article" date="1987" name="J. Bacteriol.">
        <title>Bordetella parapertussis and Bordetella bronchiseptica contain transcriptionally silent pertussis toxin genes.</title>
        <authorList>
            <person name="Arico B."/>
            <person name="Rappuoli R."/>
        </authorList>
    </citation>
    <scope>TRANSCRIPTIONAL SILENCING</scope>
    <source>
        <strain>ATCC 9305</strain>
    </source>
</reference>
<reference key="3">
    <citation type="journal article" date="1996" name="Infect. Immun.">
        <title>Analysis of proteins encoded by the ptx and ptl genes of Bordetella bronchiseptica and Bordetella parapertussis.</title>
        <authorList>
            <person name="Hausman S.Z."/>
            <person name="Cherry J.D."/>
            <person name="Heininger U."/>
            <person name="Wirsing von Koenig C.H."/>
            <person name="Burns D.L."/>
        </authorList>
    </citation>
    <scope>POSSIBLE EXPRESSION OF PTL AND PTX PROTEINS UNDER CONDITIONS DIFFERENT FROM B.PERTUSSIS EXPRESSION CONDITIONS</scope>
    <source>
        <strain>10978</strain>
        <strain>13449</strain>
    </source>
</reference>
<protein>
    <recommendedName>
        <fullName>Type IV secretion system protein PtlI homolog</fullName>
    </recommendedName>
</protein>
<name>PTLI_BORPA</name>
<sequence>MIHAHSNARLLRWAILAIAPVTLGACAPNGPPGLPYPDGKPLIPINTAAPEQGSSCQTRAP</sequence>
<feature type="signal peptide" evidence="1">
    <location>
        <begin position="1"/>
        <end position="25"/>
    </location>
</feature>
<feature type="chain" id="PRO_0000287406" description="Type IV secretion system protein PtlI homolog">
    <location>
        <begin position="26"/>
        <end position="61"/>
    </location>
</feature>
<feature type="region of interest" description="Disordered" evidence="2">
    <location>
        <begin position="37"/>
        <end position="61"/>
    </location>
</feature>
<feature type="compositionally biased region" description="Polar residues" evidence="2">
    <location>
        <begin position="52"/>
        <end position="61"/>
    </location>
</feature>
<comment type="caution">
    <text evidence="3">B.parapertussis and B.bronchiseptica seem not to produce the pertussis toxin (S1, S2, S4, S5 and S3) and ptl proteins (PtlA, PtlB, PtlC, PtlD, PtlE, PtlF, PtlG, PtlH and PtlI) in vivo due to changes in the promoter region of the ptx-ptl operon. However, it is possible that their promoter is active under certain, as-yet-undefined conditions and that B.parapertussis and B.bronchiseptica are therefore capable of producing these proteins.</text>
</comment>
<organism>
    <name type="scientific">Bordetella parapertussis (strain 12822 / ATCC BAA-587 / NCTC 13253)</name>
    <dbReference type="NCBI Taxonomy" id="257311"/>
    <lineage>
        <taxon>Bacteria</taxon>
        <taxon>Pseudomonadati</taxon>
        <taxon>Pseudomonadota</taxon>
        <taxon>Betaproteobacteria</taxon>
        <taxon>Burkholderiales</taxon>
        <taxon>Alcaligenaceae</taxon>
        <taxon>Bordetella</taxon>
    </lineage>
</organism>
<evidence type="ECO:0000255" key="1"/>
<evidence type="ECO:0000256" key="2">
    <source>
        <dbReference type="SAM" id="MobiDB-lite"/>
    </source>
</evidence>
<evidence type="ECO:0000305" key="3"/>